<proteinExistence type="inferred from homology"/>
<accession>Q250Q5</accession>
<protein>
    <recommendedName>
        <fullName evidence="1">Mini-ribonuclease 3</fullName>
        <shortName evidence="1">Mini-3</shortName>
        <shortName evidence="1">Mini-RNase 3</shortName>
        <ecNumber evidence="1">3.1.26.-</ecNumber>
    </recommendedName>
    <alternativeName>
        <fullName evidence="1">Mini-RNase III</fullName>
        <shortName evidence="1">Mini-III</shortName>
    </alternativeName>
</protein>
<evidence type="ECO:0000255" key="1">
    <source>
        <dbReference type="HAMAP-Rule" id="MF_01468"/>
    </source>
</evidence>
<evidence type="ECO:0000256" key="2">
    <source>
        <dbReference type="SAM" id="MobiDB-lite"/>
    </source>
</evidence>
<name>MRNC_DESHY</name>
<organism>
    <name type="scientific">Desulfitobacterium hafniense (strain Y51)</name>
    <dbReference type="NCBI Taxonomy" id="138119"/>
    <lineage>
        <taxon>Bacteria</taxon>
        <taxon>Bacillati</taxon>
        <taxon>Bacillota</taxon>
        <taxon>Clostridia</taxon>
        <taxon>Eubacteriales</taxon>
        <taxon>Desulfitobacteriaceae</taxon>
        <taxon>Desulfitobacterium</taxon>
    </lineage>
</organism>
<sequence>MPRSWQEMNALTLAYLGDVVYELWVRTHLLNNGYEKVNELHRLATQYVRAGTQAKLLHHILPHLDEQELSVVHRGRNAKGGHPKSTDVVTYRYATGFEALVGYWQLTGRTERMLWAFEQVDQFVGEEDEGKGKGETAKEEESITDALSPAEQSEIDC</sequence>
<keyword id="KW-0963">Cytoplasm</keyword>
<keyword id="KW-0255">Endonuclease</keyword>
<keyword id="KW-0378">Hydrolase</keyword>
<keyword id="KW-0460">Magnesium</keyword>
<keyword id="KW-0540">Nuclease</keyword>
<keyword id="KW-1185">Reference proteome</keyword>
<keyword id="KW-0690">Ribosome biogenesis</keyword>
<keyword id="KW-0694">RNA-binding</keyword>
<keyword id="KW-0698">rRNA processing</keyword>
<keyword id="KW-0699">rRNA-binding</keyword>
<gene>
    <name evidence="1" type="primary">mrnC</name>
    <name type="ordered locus">DSY0448</name>
</gene>
<feature type="chain" id="PRO_0000415983" description="Mini-ribonuclease 3">
    <location>
        <begin position="1"/>
        <end position="157"/>
    </location>
</feature>
<feature type="region of interest" description="Disordered" evidence="2">
    <location>
        <begin position="126"/>
        <end position="157"/>
    </location>
</feature>
<feature type="compositionally biased region" description="Basic and acidic residues" evidence="2">
    <location>
        <begin position="130"/>
        <end position="141"/>
    </location>
</feature>
<feature type="active site" evidence="1">
    <location>
        <position position="18"/>
    </location>
</feature>
<comment type="function">
    <text evidence="1">Involved in correct processing of both the 5' and 3' ends of 23S rRNA precursor. Processes 30S rRNA precursor transcript even in absence of ribonuclease 3 (Rnc); Rnc processes 30S rRNA into smaller rRNA precursors.</text>
</comment>
<comment type="cofactor">
    <cofactor evidence="1">
        <name>Mg(2+)</name>
        <dbReference type="ChEBI" id="CHEBI:18420"/>
    </cofactor>
</comment>
<comment type="subunit">
    <text evidence="1">Homodimer.</text>
</comment>
<comment type="subcellular location">
    <subcellularLocation>
        <location evidence="1">Cytoplasm</location>
    </subcellularLocation>
</comment>
<comment type="similarity">
    <text evidence="1">Belongs to the MrnC RNase family.</text>
</comment>
<reference key="1">
    <citation type="journal article" date="2006" name="J. Bacteriol.">
        <title>Complete genome sequence of the dehalorespiring bacterium Desulfitobacterium hafniense Y51 and comparison with Dehalococcoides ethenogenes 195.</title>
        <authorList>
            <person name="Nonaka H."/>
            <person name="Keresztes G."/>
            <person name="Shinoda Y."/>
            <person name="Ikenaga Y."/>
            <person name="Abe M."/>
            <person name="Naito K."/>
            <person name="Inatomi K."/>
            <person name="Furukawa K."/>
            <person name="Inui M."/>
            <person name="Yukawa H."/>
        </authorList>
    </citation>
    <scope>NUCLEOTIDE SEQUENCE [LARGE SCALE GENOMIC DNA]</scope>
    <source>
        <strain>Y51</strain>
    </source>
</reference>
<dbReference type="EC" id="3.1.26.-" evidence="1"/>
<dbReference type="EMBL" id="AP008230">
    <property type="protein sequence ID" value="BAE82237.1"/>
    <property type="molecule type" value="Genomic_DNA"/>
</dbReference>
<dbReference type="RefSeq" id="WP_011459085.1">
    <property type="nucleotide sequence ID" value="NC_007907.1"/>
</dbReference>
<dbReference type="SMR" id="Q250Q5"/>
<dbReference type="STRING" id="138119.DSY0448"/>
<dbReference type="KEGG" id="dsy:DSY0448"/>
<dbReference type="eggNOG" id="COG1939">
    <property type="taxonomic scope" value="Bacteria"/>
</dbReference>
<dbReference type="HOGENOM" id="CLU_091169_2_1_9"/>
<dbReference type="Proteomes" id="UP000001946">
    <property type="component" value="Chromosome"/>
</dbReference>
<dbReference type="GO" id="GO:0005737">
    <property type="term" value="C:cytoplasm"/>
    <property type="evidence" value="ECO:0007669"/>
    <property type="project" value="UniProtKB-SubCell"/>
</dbReference>
<dbReference type="GO" id="GO:0004525">
    <property type="term" value="F:ribonuclease III activity"/>
    <property type="evidence" value="ECO:0007669"/>
    <property type="project" value="InterPro"/>
</dbReference>
<dbReference type="GO" id="GO:0019843">
    <property type="term" value="F:rRNA binding"/>
    <property type="evidence" value="ECO:0007669"/>
    <property type="project" value="UniProtKB-UniRule"/>
</dbReference>
<dbReference type="GO" id="GO:0006364">
    <property type="term" value="P:rRNA processing"/>
    <property type="evidence" value="ECO:0007669"/>
    <property type="project" value="UniProtKB-UniRule"/>
</dbReference>
<dbReference type="Gene3D" id="1.10.1520.10">
    <property type="entry name" value="Ribonuclease III domain"/>
    <property type="match status" value="1"/>
</dbReference>
<dbReference type="HAMAP" id="MF_01468">
    <property type="entry name" value="RNase_Mini_III"/>
    <property type="match status" value="1"/>
</dbReference>
<dbReference type="InterPro" id="IPR008226">
    <property type="entry name" value="Mini3_fam"/>
</dbReference>
<dbReference type="InterPro" id="IPR000999">
    <property type="entry name" value="RNase_III_dom"/>
</dbReference>
<dbReference type="InterPro" id="IPR036389">
    <property type="entry name" value="RNase_III_sf"/>
</dbReference>
<dbReference type="PANTHER" id="PTHR34276">
    <property type="entry name" value="MINI-RIBONUCLEASE 3"/>
    <property type="match status" value="1"/>
</dbReference>
<dbReference type="PANTHER" id="PTHR34276:SF1">
    <property type="entry name" value="MINI-RIBONUCLEASE 3"/>
    <property type="match status" value="1"/>
</dbReference>
<dbReference type="Pfam" id="PF00636">
    <property type="entry name" value="Ribonuclease_3"/>
    <property type="match status" value="1"/>
</dbReference>
<dbReference type="SMART" id="SM00535">
    <property type="entry name" value="RIBOc"/>
    <property type="match status" value="1"/>
</dbReference>
<dbReference type="SUPFAM" id="SSF69065">
    <property type="entry name" value="RNase III domain-like"/>
    <property type="match status" value="1"/>
</dbReference>